<dbReference type="EMBL" id="X53423">
    <property type="protein sequence ID" value="CAA37510.1"/>
    <property type="molecule type" value="Genomic_DNA"/>
</dbReference>
<dbReference type="PIR" id="S06616">
    <property type="entry name" value="S06616"/>
</dbReference>
<dbReference type="GO" id="GO:0042600">
    <property type="term" value="C:egg chorion"/>
    <property type="evidence" value="ECO:0007669"/>
    <property type="project" value="InterPro"/>
</dbReference>
<dbReference type="GO" id="GO:0005576">
    <property type="term" value="C:extracellular region"/>
    <property type="evidence" value="ECO:0007669"/>
    <property type="project" value="UniProtKB-SubCell"/>
</dbReference>
<dbReference type="InterPro" id="IPR005649">
    <property type="entry name" value="Chorion_2"/>
</dbReference>
<dbReference type="Pfam" id="PF03964">
    <property type="entry name" value="Chorion_2"/>
    <property type="match status" value="1"/>
</dbReference>
<feature type="signal peptide" evidence="2">
    <location>
        <begin position="1"/>
        <end position="21"/>
    </location>
</feature>
<feature type="chain" id="PRO_0000089626" description="Chorion protein S19">
    <location>
        <begin position="22"/>
        <end position="180"/>
    </location>
</feature>
<sequence>MNTFATLAVLFCACLIGNCHGGYGGGGHGGYVQQGSYGQRSNGGAASAASSAAAAGNQRPVEIIAGGPRGGYGHGHEILRPIQLGYGGHSQRVPQHGSYGRRSGYGPRWTVQPAGATLLYPGQNNYRAYVSPPEYTKVVLPVRPAEPVAKLYIPENHYGSQQNYGTYAPQQSYNVEGPRY</sequence>
<evidence type="ECO:0000250" key="1"/>
<evidence type="ECO:0000255" key="2"/>
<evidence type="ECO:0000305" key="3"/>
<accession>P13428</accession>
<reference key="1">
    <citation type="journal article" date="1988" name="Genetics">
        <title>Evolution of the autosomal chorion locus in Drosophila. I. General organization of the locus and sequence comparisons of genes s15 and s19 in evolutionary distant species.</title>
        <authorList>
            <person name="Martinez-Cruzado J.C."/>
            <person name="Swimmer C."/>
            <person name="Fenerjian M.G."/>
            <person name="Kafatos F.C."/>
        </authorList>
    </citation>
    <scope>NUCLEOTIDE SEQUENCE [GENOMIC DNA]</scope>
</reference>
<gene>
    <name type="primary">Cp19</name>
    <name type="synonym">S19</name>
</gene>
<protein>
    <recommendedName>
        <fullName>Chorion protein S19</fullName>
    </recommendedName>
</protein>
<comment type="function">
    <text evidence="1">Chorion membrane (egg shell) protein; plays a role in protecting the egg from the environment.</text>
</comment>
<comment type="subcellular location">
    <subcellularLocation>
        <location evidence="3">Secreted</location>
    </subcellularLocation>
</comment>
<comment type="similarity">
    <text evidence="3">Belongs to the chorion protein S19 family.</text>
</comment>
<keyword id="KW-0964">Secreted</keyword>
<keyword id="KW-0732">Signal</keyword>
<organism>
    <name type="scientific">Drosophila subobscura</name>
    <name type="common">Fruit fly</name>
    <dbReference type="NCBI Taxonomy" id="7241"/>
    <lineage>
        <taxon>Eukaryota</taxon>
        <taxon>Metazoa</taxon>
        <taxon>Ecdysozoa</taxon>
        <taxon>Arthropoda</taxon>
        <taxon>Hexapoda</taxon>
        <taxon>Insecta</taxon>
        <taxon>Pterygota</taxon>
        <taxon>Neoptera</taxon>
        <taxon>Endopterygota</taxon>
        <taxon>Diptera</taxon>
        <taxon>Brachycera</taxon>
        <taxon>Muscomorpha</taxon>
        <taxon>Ephydroidea</taxon>
        <taxon>Drosophilidae</taxon>
        <taxon>Drosophila</taxon>
        <taxon>Sophophora</taxon>
    </lineage>
</organism>
<proteinExistence type="inferred from homology"/>
<name>CH19_DROSU</name>